<protein>
    <recommendedName>
        <fullName>2,5-diamino-6-ribosylamino-4(3H)-pyrimidinone 5'-phosphate reductase</fullName>
        <shortName>DAROPP reductase</shortName>
        <shortName>DARP reductase</shortName>
        <ecNumber>1.1.1.302</ecNumber>
    </recommendedName>
    <alternativeName>
        <fullName>2,5-diamino-6-(5-phospho-D-ribosylamino)pyrimidin-4(3H)-one reductase</fullName>
    </alternativeName>
    <alternativeName>
        <fullName>2,5-diamino-6-ribitylamino-4(3H)-pyrimidinone 5'-phosphate synthase</fullName>
        <shortName>DARIPP synthase</shortName>
    </alternativeName>
</protein>
<reference key="1">
    <citation type="submission" date="1993-02" db="EMBL/GenBank/DDBJ databases">
        <title>Cloning and sequencing of the RIB7 gene from Saccharomyces cerevisiae.</title>
        <authorList>
            <person name="Buitrago M.J."/>
            <person name="Garcia-Ramirez J.J."/>
            <person name="Revuelta J.L."/>
        </authorList>
    </citation>
    <scope>NUCLEOTIDE SEQUENCE [GENOMIC DNA]</scope>
</reference>
<reference key="2">
    <citation type="journal article" date="1993" name="Yeast">
        <title>Sequence of a 4.8 kb fragment of Saccharomyces cerevisiae chromosome II including three essential open reading frames.</title>
        <authorList>
            <person name="Baur A."/>
            <person name="Schaaff-Gerstenschlaeger I."/>
            <person name="Boles E."/>
            <person name="Miosga T."/>
            <person name="Rose M."/>
            <person name="Zimmermann F.K."/>
        </authorList>
    </citation>
    <scope>NUCLEOTIDE SEQUENCE [GENOMIC DNA]</scope>
    <source>
        <strain>ATCC 204508 / S288c</strain>
    </source>
</reference>
<reference key="3">
    <citation type="journal article" date="1994" name="Yeast">
        <authorList>
            <person name="Baur A."/>
            <person name="Schaaff-Gerstenschlaeger I."/>
            <person name="Boles E."/>
            <person name="Miosga T."/>
            <person name="Rose M."/>
            <person name="Zimmermann F.K."/>
        </authorList>
    </citation>
    <scope>ERRATUM OF PUBMED:8488729</scope>
</reference>
<reference key="4">
    <citation type="journal article" date="1994" name="EMBO J.">
        <title>Complete DNA sequence of yeast chromosome II.</title>
        <authorList>
            <person name="Feldmann H."/>
            <person name="Aigle M."/>
            <person name="Aljinovic G."/>
            <person name="Andre B."/>
            <person name="Baclet M.C."/>
            <person name="Barthe C."/>
            <person name="Baur A."/>
            <person name="Becam A.-M."/>
            <person name="Biteau N."/>
            <person name="Boles E."/>
            <person name="Brandt T."/>
            <person name="Brendel M."/>
            <person name="Brueckner M."/>
            <person name="Bussereau F."/>
            <person name="Christiansen C."/>
            <person name="Contreras R."/>
            <person name="Crouzet M."/>
            <person name="Cziepluch C."/>
            <person name="Demolis N."/>
            <person name="Delaveau T."/>
            <person name="Doignon F."/>
            <person name="Domdey H."/>
            <person name="Duesterhus S."/>
            <person name="Dubois E."/>
            <person name="Dujon B."/>
            <person name="El Bakkoury M."/>
            <person name="Entian K.-D."/>
            <person name="Feuermann M."/>
            <person name="Fiers W."/>
            <person name="Fobo G.M."/>
            <person name="Fritz C."/>
            <person name="Gassenhuber J."/>
            <person name="Glansdorff N."/>
            <person name="Goffeau A."/>
            <person name="Grivell L.A."/>
            <person name="de Haan M."/>
            <person name="Hein C."/>
            <person name="Herbert C.J."/>
            <person name="Hollenberg C.P."/>
            <person name="Holmstroem K."/>
            <person name="Jacq C."/>
            <person name="Jacquet M."/>
            <person name="Jauniaux J.-C."/>
            <person name="Jonniaux J.-L."/>
            <person name="Kallesoee T."/>
            <person name="Kiesau P."/>
            <person name="Kirchrath L."/>
            <person name="Koetter P."/>
            <person name="Korol S."/>
            <person name="Liebl S."/>
            <person name="Logghe M."/>
            <person name="Lohan A.J.E."/>
            <person name="Louis E.J."/>
            <person name="Li Z.Y."/>
            <person name="Maat M.J."/>
            <person name="Mallet L."/>
            <person name="Mannhaupt G."/>
            <person name="Messenguy F."/>
            <person name="Miosga T."/>
            <person name="Molemans F."/>
            <person name="Mueller S."/>
            <person name="Nasr F."/>
            <person name="Obermaier B."/>
            <person name="Perea J."/>
            <person name="Pierard A."/>
            <person name="Piravandi E."/>
            <person name="Pohl F.M."/>
            <person name="Pohl T.M."/>
            <person name="Potier S."/>
            <person name="Proft M."/>
            <person name="Purnelle B."/>
            <person name="Ramezani Rad M."/>
            <person name="Rieger M."/>
            <person name="Rose M."/>
            <person name="Schaaff-Gerstenschlaeger I."/>
            <person name="Scherens B."/>
            <person name="Schwarzlose C."/>
            <person name="Skala J."/>
            <person name="Slonimski P.P."/>
            <person name="Smits P.H.M."/>
            <person name="Souciet J.-L."/>
            <person name="Steensma H.Y."/>
            <person name="Stucka R."/>
            <person name="Urrestarazu L.A."/>
            <person name="van der Aart Q.J.M."/>
            <person name="Van Dyck L."/>
            <person name="Vassarotti A."/>
            <person name="Vetter I."/>
            <person name="Vierendeels F."/>
            <person name="Vissers S."/>
            <person name="Wagner G."/>
            <person name="de Wergifosse P."/>
            <person name="Wolfe K.H."/>
            <person name="Zagulski M."/>
            <person name="Zimmermann F.K."/>
            <person name="Mewes H.-W."/>
            <person name="Kleine K."/>
        </authorList>
    </citation>
    <scope>NUCLEOTIDE SEQUENCE [LARGE SCALE GENOMIC DNA]</scope>
    <source>
        <strain>ATCC 204508 / S288c</strain>
    </source>
</reference>
<reference key="5">
    <citation type="journal article" date="2014" name="G3 (Bethesda)">
        <title>The reference genome sequence of Saccharomyces cerevisiae: Then and now.</title>
        <authorList>
            <person name="Engel S.R."/>
            <person name="Dietrich F.S."/>
            <person name="Fisk D.G."/>
            <person name="Binkley G."/>
            <person name="Balakrishnan R."/>
            <person name="Costanzo M.C."/>
            <person name="Dwight S.S."/>
            <person name="Hitz B.C."/>
            <person name="Karra K."/>
            <person name="Nash R.S."/>
            <person name="Weng S."/>
            <person name="Wong E.D."/>
            <person name="Lloyd P."/>
            <person name="Skrzypek M.S."/>
            <person name="Miyasato S.R."/>
            <person name="Simison M."/>
            <person name="Cherry J.M."/>
        </authorList>
    </citation>
    <scope>GENOME REANNOTATION</scope>
    <source>
        <strain>ATCC 204508 / S288c</strain>
    </source>
</reference>
<reference key="6">
    <citation type="journal article" date="2007" name="Genome Res.">
        <title>Approaching a complete repository of sequence-verified protein-encoding clones for Saccharomyces cerevisiae.</title>
        <authorList>
            <person name="Hu Y."/>
            <person name="Rolfs A."/>
            <person name="Bhullar B."/>
            <person name="Murthy T.V.S."/>
            <person name="Zhu C."/>
            <person name="Berger M.F."/>
            <person name="Camargo A.A."/>
            <person name="Kelley F."/>
            <person name="McCarron S."/>
            <person name="Jepson D."/>
            <person name="Richardson A."/>
            <person name="Raphael J."/>
            <person name="Moreira D."/>
            <person name="Taycher E."/>
            <person name="Zuo D."/>
            <person name="Mohr S."/>
            <person name="Kane M.F."/>
            <person name="Williamson J."/>
            <person name="Simpson A.J.G."/>
            <person name="Bulyk M.L."/>
            <person name="Harlow E."/>
            <person name="Marsischky G."/>
            <person name="Kolodner R.D."/>
            <person name="LaBaer J."/>
        </authorList>
    </citation>
    <scope>NUCLEOTIDE SEQUENCE [GENOMIC DNA]</scope>
    <source>
        <strain>ATCC 204508 / S288c</strain>
    </source>
</reference>
<reference key="7">
    <citation type="journal article" date="1972" name="J. Bacteriol.">
        <title>Biosynthesis of riboflavine in Saccharomyces cerevisiae: the role of genes rib 1 and rib 7.</title>
        <authorList>
            <person name="Oltmanns O."/>
            <person name="Bacher A."/>
        </authorList>
    </citation>
    <scope>FUNCTION</scope>
    <scope>DISRUPTION PHENOTYPE</scope>
    <source>
        <strain>ATCC 204508 / S288c</strain>
    </source>
</reference>
<name>RIB7_YEAST</name>
<gene>
    <name type="primary">RIB7</name>
    <name type="ordered locus">YBR153W</name>
    <name type="ORF">YBR1203</name>
</gene>
<comment type="function">
    <text evidence="4">Catalyzes an early step in riboflavin biosynthesis, the NADPH-dependent reduction of the ribose side chain of 2,5-diamino-6-ribosylamino-4(3H)-pyrimidinone 5'-phosphate, yielding 2,5-diamino-6-ribitylamino-4(3H)-pyrimidinone 5'-phosphate.</text>
</comment>
<comment type="catalytic activity">
    <reaction>
        <text>2,5-diamino-6-(1-D-ribitylamino)pyrimidin-4(3H)-one 5'-phosphate + NADP(+) = 2,5-diamino-6-(1-D-ribosylamino)pyrimidin-4(3H)-one 5'-phosphate + NADPH + H(+)</text>
        <dbReference type="Rhea" id="RHEA:27278"/>
        <dbReference type="ChEBI" id="CHEBI:15378"/>
        <dbReference type="ChEBI" id="CHEBI:57783"/>
        <dbReference type="ChEBI" id="CHEBI:58349"/>
        <dbReference type="ChEBI" id="CHEBI:58890"/>
        <dbReference type="ChEBI" id="CHEBI:59545"/>
        <dbReference type="EC" id="1.1.1.302"/>
    </reaction>
</comment>
<comment type="catalytic activity">
    <reaction>
        <text>2,5-diamino-6-(1-D-ribitylamino)pyrimidin-4(3H)-one 5'-phosphate + NAD(+) = 2,5-diamino-6-(1-D-ribosylamino)pyrimidin-4(3H)-one 5'-phosphate + NADH + H(+)</text>
        <dbReference type="Rhea" id="RHEA:27274"/>
        <dbReference type="ChEBI" id="CHEBI:15378"/>
        <dbReference type="ChEBI" id="CHEBI:57540"/>
        <dbReference type="ChEBI" id="CHEBI:57945"/>
        <dbReference type="ChEBI" id="CHEBI:58890"/>
        <dbReference type="ChEBI" id="CHEBI:59545"/>
        <dbReference type="EC" id="1.1.1.302"/>
    </reaction>
</comment>
<comment type="pathway">
    <text>Cofactor biosynthesis; riboflavin biosynthesis.</text>
</comment>
<comment type="subunit">
    <text evidence="1">Homodimer.</text>
</comment>
<comment type="disruption phenotype">
    <text evidence="2">Cells lacking this gene accumulate a 6-hydroxy-2,4,5-triaminopyrimidine derivative.</text>
</comment>
<comment type="similarity">
    <text evidence="3">Belongs to the HTP reductase family.</text>
</comment>
<comment type="sequence caution" evidence="3">
    <conflict type="erroneous initiation">
        <sequence resource="EMBL-CDS" id="AAC60554"/>
    </conflict>
</comment>
<sequence>MSLTPLCEDLPQFLQNYLPNAGQTENTIVPFVTLTYAQSLDARVSRGPGVRTTISHPETKTMTHYLRHHHDGILVGSGTVLADNPGLNCKWGPDPAANSPRPIIIDTKQKWRFDGSKMQELFIKRQGKPPIVVVTSEPIIKEQHVDYAICPINDTTKLVDWKKLFEILKEEFNIRSVMVEGGANVINQLLLRSDIVNSLIITIGSTFLGSSGTEVSPPQTVNLKDMSWWKGITDVVLCARLADD</sequence>
<accession>P33312</accession>
<accession>D6VQE8</accession>
<feature type="chain" id="PRO_0000135942" description="2,5-diamino-6-ribosylamino-4(3H)-pyrimidinone 5'-phosphate reductase">
    <location>
        <begin position="1"/>
        <end position="244"/>
    </location>
</feature>
<feature type="binding site" evidence="1">
    <location>
        <position position="79"/>
    </location>
    <ligand>
        <name>NADP(+)</name>
        <dbReference type="ChEBI" id="CHEBI:58349"/>
    </ligand>
</feature>
<feature type="binding site" evidence="1">
    <location>
        <position position="83"/>
    </location>
    <ligand>
        <name>NADP(+)</name>
        <dbReference type="ChEBI" id="CHEBI:58349"/>
    </ligand>
</feature>
<feature type="binding site" evidence="1">
    <location>
        <position position="159"/>
    </location>
    <ligand>
        <name>NADP(+)</name>
        <dbReference type="ChEBI" id="CHEBI:58349"/>
    </ligand>
</feature>
<feature type="binding site" evidence="1">
    <location>
        <begin position="182"/>
        <end position="186"/>
    </location>
    <ligand>
        <name>NADP(+)</name>
        <dbReference type="ChEBI" id="CHEBI:58349"/>
    </ligand>
</feature>
<feature type="helix" evidence="5">
    <location>
        <begin position="10"/>
        <end position="15"/>
    </location>
</feature>
<feature type="helix" evidence="5">
    <location>
        <begin position="19"/>
        <end position="21"/>
    </location>
</feature>
<feature type="strand" evidence="5">
    <location>
        <begin position="31"/>
        <end position="38"/>
    </location>
</feature>
<feature type="strand" evidence="5">
    <location>
        <begin position="42"/>
        <end position="45"/>
    </location>
</feature>
<feature type="helix" evidence="5">
    <location>
        <begin position="58"/>
        <end position="67"/>
    </location>
</feature>
<feature type="strand" evidence="5">
    <location>
        <begin position="71"/>
        <end position="76"/>
    </location>
</feature>
<feature type="helix" evidence="5">
    <location>
        <begin position="79"/>
        <end position="82"/>
    </location>
</feature>
<feature type="strand" evidence="5">
    <location>
        <begin position="101"/>
        <end position="105"/>
    </location>
</feature>
<feature type="helix" evidence="5">
    <location>
        <begin position="117"/>
        <end position="123"/>
    </location>
</feature>
<feature type="strand" evidence="5">
    <location>
        <begin position="131"/>
        <end position="136"/>
    </location>
</feature>
<feature type="strand" evidence="5">
    <location>
        <begin position="146"/>
        <end position="149"/>
    </location>
</feature>
<feature type="turn" evidence="5">
    <location>
        <begin position="154"/>
        <end position="156"/>
    </location>
</feature>
<feature type="strand" evidence="5">
    <location>
        <begin position="157"/>
        <end position="159"/>
    </location>
</feature>
<feature type="helix" evidence="5">
    <location>
        <begin position="161"/>
        <end position="172"/>
    </location>
</feature>
<feature type="strand" evidence="5">
    <location>
        <begin position="176"/>
        <end position="181"/>
    </location>
</feature>
<feature type="helix" evidence="5">
    <location>
        <begin position="183"/>
        <end position="189"/>
    </location>
</feature>
<feature type="turn" evidence="5">
    <location>
        <begin position="193"/>
        <end position="195"/>
    </location>
</feature>
<feature type="strand" evidence="5">
    <location>
        <begin position="197"/>
        <end position="207"/>
    </location>
</feature>
<feature type="strand" evidence="5">
    <location>
        <begin position="223"/>
        <end position="230"/>
    </location>
</feature>
<feature type="strand" evidence="5">
    <location>
        <begin position="232"/>
        <end position="241"/>
    </location>
</feature>
<keyword id="KW-0002">3D-structure</keyword>
<keyword id="KW-0521">NADP</keyword>
<keyword id="KW-0560">Oxidoreductase</keyword>
<keyword id="KW-1185">Reference proteome</keyword>
<keyword id="KW-0686">Riboflavin biosynthesis</keyword>
<dbReference type="EC" id="1.1.1.302"/>
<dbReference type="EMBL" id="Z21622">
    <property type="protein sequence ID" value="CAA79746.1"/>
    <property type="molecule type" value="Genomic_DNA"/>
</dbReference>
<dbReference type="EMBL" id="X71329">
    <property type="protein sequence ID" value="CAA50471.1"/>
    <property type="molecule type" value="Genomic_DNA"/>
</dbReference>
<dbReference type="EMBL" id="S59774">
    <property type="protein sequence ID" value="AAC60554.1"/>
    <property type="status" value="ALT_INIT"/>
    <property type="molecule type" value="Genomic_DNA"/>
</dbReference>
<dbReference type="EMBL" id="Z36022">
    <property type="protein sequence ID" value="CAA85112.1"/>
    <property type="molecule type" value="Genomic_DNA"/>
</dbReference>
<dbReference type="EMBL" id="AY557713">
    <property type="protein sequence ID" value="AAS56039.1"/>
    <property type="molecule type" value="Genomic_DNA"/>
</dbReference>
<dbReference type="EMBL" id="BK006936">
    <property type="protein sequence ID" value="DAA07268.1"/>
    <property type="molecule type" value="Genomic_DNA"/>
</dbReference>
<dbReference type="PIR" id="S40698">
    <property type="entry name" value="S40698"/>
</dbReference>
<dbReference type="RefSeq" id="NP_009711.3">
    <property type="nucleotide sequence ID" value="NM_001178501.3"/>
</dbReference>
<dbReference type="PDB" id="4HA7">
    <property type="method" value="X-ray"/>
    <property type="resolution" value="2.10 A"/>
    <property type="chains" value="A/B=1-244"/>
</dbReference>
<dbReference type="PDB" id="4HA9">
    <property type="method" value="X-ray"/>
    <property type="resolution" value="2.35 A"/>
    <property type="chains" value="A/B=1-244"/>
</dbReference>
<dbReference type="PDBsum" id="4HA7"/>
<dbReference type="PDBsum" id="4HA9"/>
<dbReference type="SMR" id="P33312"/>
<dbReference type="BioGRID" id="32852">
    <property type="interactions" value="64"/>
</dbReference>
<dbReference type="FunCoup" id="P33312">
    <property type="interactions" value="163"/>
</dbReference>
<dbReference type="IntAct" id="P33312">
    <property type="interactions" value="2"/>
</dbReference>
<dbReference type="STRING" id="4932.YBR153W"/>
<dbReference type="PaxDb" id="4932-YBR153W"/>
<dbReference type="PeptideAtlas" id="P33312"/>
<dbReference type="EnsemblFungi" id="YBR153W_mRNA">
    <property type="protein sequence ID" value="YBR153W"/>
    <property type="gene ID" value="YBR153W"/>
</dbReference>
<dbReference type="GeneID" id="852450"/>
<dbReference type="KEGG" id="sce:YBR153W"/>
<dbReference type="AGR" id="SGD:S000000357"/>
<dbReference type="SGD" id="S000000357">
    <property type="gene designation" value="RIB7"/>
</dbReference>
<dbReference type="VEuPathDB" id="FungiDB:YBR153W"/>
<dbReference type="eggNOG" id="ENOG502RZWZ">
    <property type="taxonomic scope" value="Eukaryota"/>
</dbReference>
<dbReference type="HOGENOM" id="CLU_036590_5_0_1"/>
<dbReference type="InParanoid" id="P33312"/>
<dbReference type="OMA" id="HYLRYHH"/>
<dbReference type="OrthoDB" id="5432at2759"/>
<dbReference type="BioCyc" id="MetaCyc:MONOMER3O-27"/>
<dbReference type="BioCyc" id="YEAST:MONOMER3O-27"/>
<dbReference type="UniPathway" id="UPA00275"/>
<dbReference type="BioGRID-ORCS" id="852450">
    <property type="hits" value="4 hits in 10 CRISPR screens"/>
</dbReference>
<dbReference type="EvolutionaryTrace" id="P33312"/>
<dbReference type="PRO" id="PR:P33312"/>
<dbReference type="Proteomes" id="UP000002311">
    <property type="component" value="Chromosome II"/>
</dbReference>
<dbReference type="RNAct" id="P33312">
    <property type="molecule type" value="protein"/>
</dbReference>
<dbReference type="GO" id="GO:0008703">
    <property type="term" value="F:5-amino-6-(5-phosphoribosylamino)uracil reductase activity"/>
    <property type="evidence" value="ECO:0000314"/>
    <property type="project" value="SGD"/>
</dbReference>
<dbReference type="GO" id="GO:0050661">
    <property type="term" value="F:NADP binding"/>
    <property type="evidence" value="ECO:0007669"/>
    <property type="project" value="InterPro"/>
</dbReference>
<dbReference type="GO" id="GO:0009231">
    <property type="term" value="P:riboflavin biosynthetic process"/>
    <property type="evidence" value="ECO:0000315"/>
    <property type="project" value="SGD"/>
</dbReference>
<dbReference type="FunFam" id="3.40.430.10:FF:000011">
    <property type="entry name" value="Rib7p"/>
    <property type="match status" value="1"/>
</dbReference>
<dbReference type="Gene3D" id="3.40.430.10">
    <property type="entry name" value="Dihydrofolate Reductase, subunit A"/>
    <property type="match status" value="1"/>
</dbReference>
<dbReference type="InterPro" id="IPR024072">
    <property type="entry name" value="DHFR-like_dom_sf"/>
</dbReference>
<dbReference type="InterPro" id="IPR011549">
    <property type="entry name" value="RibD_C"/>
</dbReference>
<dbReference type="InterPro" id="IPR002734">
    <property type="entry name" value="RibDG_C"/>
</dbReference>
<dbReference type="InterPro" id="IPR050765">
    <property type="entry name" value="Riboflavin_Biosynth_HTPR"/>
</dbReference>
<dbReference type="NCBIfam" id="TIGR00227">
    <property type="entry name" value="ribD_Cterm"/>
    <property type="match status" value="1"/>
</dbReference>
<dbReference type="PANTHER" id="PTHR38011:SF7">
    <property type="entry name" value="2,5-DIAMINO-6-RIBOSYLAMINO-4(3H)-PYRIMIDINONE 5'-PHOSPHATE REDUCTASE"/>
    <property type="match status" value="1"/>
</dbReference>
<dbReference type="PANTHER" id="PTHR38011">
    <property type="entry name" value="DIHYDROFOLATE REDUCTASE FAMILY PROTEIN (AFU_ORTHOLOGUE AFUA_8G06820)"/>
    <property type="match status" value="1"/>
</dbReference>
<dbReference type="Pfam" id="PF01872">
    <property type="entry name" value="RibD_C"/>
    <property type="match status" value="1"/>
</dbReference>
<dbReference type="SUPFAM" id="SSF53597">
    <property type="entry name" value="Dihydrofolate reductase-like"/>
    <property type="match status" value="1"/>
</dbReference>
<proteinExistence type="evidence at protein level"/>
<organism>
    <name type="scientific">Saccharomyces cerevisiae (strain ATCC 204508 / S288c)</name>
    <name type="common">Baker's yeast</name>
    <dbReference type="NCBI Taxonomy" id="559292"/>
    <lineage>
        <taxon>Eukaryota</taxon>
        <taxon>Fungi</taxon>
        <taxon>Dikarya</taxon>
        <taxon>Ascomycota</taxon>
        <taxon>Saccharomycotina</taxon>
        <taxon>Saccharomycetes</taxon>
        <taxon>Saccharomycetales</taxon>
        <taxon>Saccharomycetaceae</taxon>
        <taxon>Saccharomyces</taxon>
    </lineage>
</organism>
<evidence type="ECO:0000250" key="1"/>
<evidence type="ECO:0000269" key="2">
    <source>
    </source>
</evidence>
<evidence type="ECO:0000305" key="3"/>
<evidence type="ECO:0000305" key="4">
    <source>
    </source>
</evidence>
<evidence type="ECO:0007829" key="5">
    <source>
        <dbReference type="PDB" id="4HA7"/>
    </source>
</evidence>